<accession>Q1C912</accession>
<sequence length="328" mass="35923">MNRKKIIVAAVIVALLATLAYGWHYYRQQNDASLTLYGNVDIRTVNLGFRVAGRLASLAVDEGDDIHPGQTLGKLDDGPYLNALKQAQANVQSAQAQLALLKAGYREEEIAQVRSEVAQRQAAFDYADNFLKRQQGLWASKAVSANELENARTARNQAQANLQAAKDKLAQFLSGNRPQEIAQAEANLAQTEAELAQAQLNLQDTILLAPSAGTVLTRAVEPGTILSASNTVFTVSLTDPVWVRAYVSERHLGQAIPGSEVEVFTDGRPDKPYHGKIGFVSPTAEFTPKTVETPDLRTDLVYRLRIIITDADESLRQGMPVTVRFPQR</sequence>
<feature type="signal peptide" evidence="1">
    <location>
        <begin position="1"/>
        <end position="22"/>
    </location>
</feature>
<feature type="chain" id="PRO_5000115889" description="UPF0194 membrane protein YPA_1093">
    <location>
        <begin position="23"/>
        <end position="328"/>
    </location>
</feature>
<feature type="coiled-coil region" evidence="1">
    <location>
        <begin position="80"/>
        <end position="109"/>
    </location>
</feature>
<feature type="coiled-coil region" evidence="1">
    <location>
        <begin position="141"/>
        <end position="209"/>
    </location>
</feature>
<evidence type="ECO:0000255" key="1">
    <source>
        <dbReference type="HAMAP-Rule" id="MF_01304"/>
    </source>
</evidence>
<protein>
    <recommendedName>
        <fullName evidence="1">UPF0194 membrane protein YPA_1093</fullName>
    </recommendedName>
</protein>
<name>Y1093_YERPA</name>
<dbReference type="EMBL" id="CP000308">
    <property type="protein sequence ID" value="ABG13060.1"/>
    <property type="molecule type" value="Genomic_DNA"/>
</dbReference>
<dbReference type="SMR" id="Q1C912"/>
<dbReference type="KEGG" id="ypa:YPA_1093"/>
<dbReference type="Proteomes" id="UP000001971">
    <property type="component" value="Chromosome"/>
</dbReference>
<dbReference type="GO" id="GO:0042597">
    <property type="term" value="C:periplasmic space"/>
    <property type="evidence" value="ECO:0007669"/>
    <property type="project" value="UniProtKB-SubCell"/>
</dbReference>
<dbReference type="Gene3D" id="2.40.30.170">
    <property type="match status" value="1"/>
</dbReference>
<dbReference type="Gene3D" id="2.40.50.100">
    <property type="match status" value="1"/>
</dbReference>
<dbReference type="Gene3D" id="1.10.287.470">
    <property type="entry name" value="Helix hairpin bin"/>
    <property type="match status" value="2"/>
</dbReference>
<dbReference type="HAMAP" id="MF_01304">
    <property type="entry name" value="UPF0194"/>
    <property type="match status" value="1"/>
</dbReference>
<dbReference type="InterPro" id="IPR032317">
    <property type="entry name" value="CusB_D23"/>
</dbReference>
<dbReference type="InterPro" id="IPR022936">
    <property type="entry name" value="UPF0194_membrane_YbhG"/>
</dbReference>
<dbReference type="InterPro" id="IPR050465">
    <property type="entry name" value="UPF0194_transport"/>
</dbReference>
<dbReference type="NCBIfam" id="NF002939">
    <property type="entry name" value="PRK03598.1"/>
    <property type="match status" value="1"/>
</dbReference>
<dbReference type="PANTHER" id="PTHR32347">
    <property type="entry name" value="EFFLUX SYSTEM COMPONENT YKNX-RELATED"/>
    <property type="match status" value="1"/>
</dbReference>
<dbReference type="PANTHER" id="PTHR32347:SF29">
    <property type="entry name" value="UPF0194 MEMBRANE PROTEIN YBHG"/>
    <property type="match status" value="1"/>
</dbReference>
<dbReference type="Pfam" id="PF16576">
    <property type="entry name" value="HlyD_D23"/>
    <property type="match status" value="1"/>
</dbReference>
<dbReference type="SUPFAM" id="SSF111369">
    <property type="entry name" value="HlyD-like secretion proteins"/>
    <property type="match status" value="2"/>
</dbReference>
<proteinExistence type="inferred from homology"/>
<reference key="1">
    <citation type="journal article" date="2006" name="J. Bacteriol.">
        <title>Complete genome sequence of Yersinia pestis strains Antiqua and Nepal516: evidence of gene reduction in an emerging pathogen.</title>
        <authorList>
            <person name="Chain P.S.G."/>
            <person name="Hu P."/>
            <person name="Malfatti S.A."/>
            <person name="Radnedge L."/>
            <person name="Larimer F."/>
            <person name="Vergez L.M."/>
            <person name="Worsham P."/>
            <person name="Chu M.C."/>
            <person name="Andersen G.L."/>
        </authorList>
    </citation>
    <scope>NUCLEOTIDE SEQUENCE [LARGE SCALE GENOMIC DNA]</scope>
    <source>
        <strain>Antiqua</strain>
    </source>
</reference>
<gene>
    <name type="ordered locus">YPA_1093</name>
</gene>
<keyword id="KW-0175">Coiled coil</keyword>
<keyword id="KW-0574">Periplasm</keyword>
<keyword id="KW-0732">Signal</keyword>
<organism>
    <name type="scientific">Yersinia pestis bv. Antiqua (strain Antiqua)</name>
    <dbReference type="NCBI Taxonomy" id="360102"/>
    <lineage>
        <taxon>Bacteria</taxon>
        <taxon>Pseudomonadati</taxon>
        <taxon>Pseudomonadota</taxon>
        <taxon>Gammaproteobacteria</taxon>
        <taxon>Enterobacterales</taxon>
        <taxon>Yersiniaceae</taxon>
        <taxon>Yersinia</taxon>
    </lineage>
</organism>
<comment type="subcellular location">
    <subcellularLocation>
        <location evidence="1">Periplasm</location>
    </subcellularLocation>
</comment>
<comment type="similarity">
    <text evidence="1">Belongs to the UPF0194 family.</text>
</comment>